<gene>
    <name evidence="1" type="primary">rplA</name>
    <name type="ordered locus">Daro_0309</name>
</gene>
<dbReference type="EMBL" id="CP000089">
    <property type="protein sequence ID" value="AAZ45068.1"/>
    <property type="molecule type" value="Genomic_DNA"/>
</dbReference>
<dbReference type="SMR" id="Q47JB3"/>
<dbReference type="STRING" id="159087.Daro_0309"/>
<dbReference type="KEGG" id="dar:Daro_0309"/>
<dbReference type="eggNOG" id="COG0081">
    <property type="taxonomic scope" value="Bacteria"/>
</dbReference>
<dbReference type="HOGENOM" id="CLU_062853_0_0_4"/>
<dbReference type="OrthoDB" id="9803740at2"/>
<dbReference type="GO" id="GO:0022625">
    <property type="term" value="C:cytosolic large ribosomal subunit"/>
    <property type="evidence" value="ECO:0007669"/>
    <property type="project" value="TreeGrafter"/>
</dbReference>
<dbReference type="GO" id="GO:0019843">
    <property type="term" value="F:rRNA binding"/>
    <property type="evidence" value="ECO:0007669"/>
    <property type="project" value="UniProtKB-UniRule"/>
</dbReference>
<dbReference type="GO" id="GO:0003735">
    <property type="term" value="F:structural constituent of ribosome"/>
    <property type="evidence" value="ECO:0007669"/>
    <property type="project" value="InterPro"/>
</dbReference>
<dbReference type="GO" id="GO:0000049">
    <property type="term" value="F:tRNA binding"/>
    <property type="evidence" value="ECO:0007669"/>
    <property type="project" value="UniProtKB-KW"/>
</dbReference>
<dbReference type="GO" id="GO:0006417">
    <property type="term" value="P:regulation of translation"/>
    <property type="evidence" value="ECO:0007669"/>
    <property type="project" value="UniProtKB-KW"/>
</dbReference>
<dbReference type="GO" id="GO:0006412">
    <property type="term" value="P:translation"/>
    <property type="evidence" value="ECO:0007669"/>
    <property type="project" value="UniProtKB-UniRule"/>
</dbReference>
<dbReference type="CDD" id="cd00403">
    <property type="entry name" value="Ribosomal_L1"/>
    <property type="match status" value="1"/>
</dbReference>
<dbReference type="FunFam" id="3.40.50.790:FF:000001">
    <property type="entry name" value="50S ribosomal protein L1"/>
    <property type="match status" value="1"/>
</dbReference>
<dbReference type="Gene3D" id="3.30.190.20">
    <property type="match status" value="1"/>
</dbReference>
<dbReference type="Gene3D" id="3.40.50.790">
    <property type="match status" value="1"/>
</dbReference>
<dbReference type="HAMAP" id="MF_01318_B">
    <property type="entry name" value="Ribosomal_uL1_B"/>
    <property type="match status" value="1"/>
</dbReference>
<dbReference type="InterPro" id="IPR005878">
    <property type="entry name" value="Ribosom_uL1_bac-type"/>
</dbReference>
<dbReference type="InterPro" id="IPR002143">
    <property type="entry name" value="Ribosomal_uL1"/>
</dbReference>
<dbReference type="InterPro" id="IPR023674">
    <property type="entry name" value="Ribosomal_uL1-like"/>
</dbReference>
<dbReference type="InterPro" id="IPR028364">
    <property type="entry name" value="Ribosomal_uL1/biogenesis"/>
</dbReference>
<dbReference type="InterPro" id="IPR016095">
    <property type="entry name" value="Ribosomal_uL1_3-a/b-sand"/>
</dbReference>
<dbReference type="InterPro" id="IPR023673">
    <property type="entry name" value="Ribosomal_uL1_CS"/>
</dbReference>
<dbReference type="NCBIfam" id="TIGR01169">
    <property type="entry name" value="rplA_bact"/>
    <property type="match status" value="1"/>
</dbReference>
<dbReference type="PANTHER" id="PTHR36427">
    <property type="entry name" value="54S RIBOSOMAL PROTEIN L1, MITOCHONDRIAL"/>
    <property type="match status" value="1"/>
</dbReference>
<dbReference type="PANTHER" id="PTHR36427:SF3">
    <property type="entry name" value="LARGE RIBOSOMAL SUBUNIT PROTEIN UL1M"/>
    <property type="match status" value="1"/>
</dbReference>
<dbReference type="Pfam" id="PF00687">
    <property type="entry name" value="Ribosomal_L1"/>
    <property type="match status" value="1"/>
</dbReference>
<dbReference type="PIRSF" id="PIRSF002155">
    <property type="entry name" value="Ribosomal_L1"/>
    <property type="match status" value="1"/>
</dbReference>
<dbReference type="SUPFAM" id="SSF56808">
    <property type="entry name" value="Ribosomal protein L1"/>
    <property type="match status" value="1"/>
</dbReference>
<dbReference type="PROSITE" id="PS01199">
    <property type="entry name" value="RIBOSOMAL_L1"/>
    <property type="match status" value="1"/>
</dbReference>
<reference key="1">
    <citation type="journal article" date="2009" name="BMC Genomics">
        <title>Metabolic analysis of the soil microbe Dechloromonas aromatica str. RCB: indications of a surprisingly complex life-style and cryptic anaerobic pathways for aromatic degradation.</title>
        <authorList>
            <person name="Salinero K.K."/>
            <person name="Keller K."/>
            <person name="Feil W.S."/>
            <person name="Feil H."/>
            <person name="Trong S."/>
            <person name="Di Bartolo G."/>
            <person name="Lapidus A."/>
        </authorList>
    </citation>
    <scope>NUCLEOTIDE SEQUENCE [LARGE SCALE GENOMIC DNA]</scope>
    <source>
        <strain>RCB</strain>
    </source>
</reference>
<proteinExistence type="inferred from homology"/>
<feature type="chain" id="PRO_0000230604" description="Large ribosomal subunit protein uL1">
    <location>
        <begin position="1"/>
        <end position="231"/>
    </location>
</feature>
<comment type="function">
    <text evidence="1">Binds directly to 23S rRNA. The L1 stalk is quite mobile in the ribosome, and is involved in E site tRNA release.</text>
</comment>
<comment type="function">
    <text evidence="1">Protein L1 is also a translational repressor protein, it controls the translation of the L11 operon by binding to its mRNA.</text>
</comment>
<comment type="subunit">
    <text evidence="1">Part of the 50S ribosomal subunit.</text>
</comment>
<comment type="similarity">
    <text evidence="1">Belongs to the universal ribosomal protein uL1 family.</text>
</comment>
<organism>
    <name type="scientific">Dechloromonas aromatica (strain RCB)</name>
    <dbReference type="NCBI Taxonomy" id="159087"/>
    <lineage>
        <taxon>Bacteria</taxon>
        <taxon>Pseudomonadati</taxon>
        <taxon>Pseudomonadota</taxon>
        <taxon>Betaproteobacteria</taxon>
        <taxon>Rhodocyclales</taxon>
        <taxon>Azonexaceae</taxon>
        <taxon>Dechloromonas</taxon>
    </lineage>
</organism>
<protein>
    <recommendedName>
        <fullName evidence="1">Large ribosomal subunit protein uL1</fullName>
    </recommendedName>
    <alternativeName>
        <fullName evidence="2">50S ribosomal protein L1</fullName>
    </alternativeName>
</protein>
<evidence type="ECO:0000255" key="1">
    <source>
        <dbReference type="HAMAP-Rule" id="MF_01318"/>
    </source>
</evidence>
<evidence type="ECO:0000305" key="2"/>
<sequence>MAKLTKKQKALASKVVAQKLYPLQEALTLAKETAIAKFDESIDVAVNLGVDARKSDQVVRGSVVLPAGTGKSVRVAVFAQGEKAEAAKAAGAEVVGFDDLAAEVKAGNLNFDVVIATPDAMKVVGQLGQILGPRGLMPNPKVGTVTMDVVTAVKNAKAGQVQYRTDKAGIIHATIGRASFSVESLESNLKALIDALAKAKPASSKGQYLKKIAVSATMGPGVRVDQSTVVA</sequence>
<name>RL1_DECAR</name>
<keyword id="KW-0678">Repressor</keyword>
<keyword id="KW-0687">Ribonucleoprotein</keyword>
<keyword id="KW-0689">Ribosomal protein</keyword>
<keyword id="KW-0694">RNA-binding</keyword>
<keyword id="KW-0699">rRNA-binding</keyword>
<keyword id="KW-0810">Translation regulation</keyword>
<keyword id="KW-0820">tRNA-binding</keyword>
<accession>Q47JB3</accession>